<dbReference type="EC" id="2.7.7.3" evidence="1"/>
<dbReference type="EMBL" id="AE017198">
    <property type="protein sequence ID" value="AAS08821.1"/>
    <property type="molecule type" value="Genomic_DNA"/>
</dbReference>
<dbReference type="RefSeq" id="WP_011161860.1">
    <property type="nucleotide sequence ID" value="NC_005362.1"/>
</dbReference>
<dbReference type="SMR" id="Q74JV6"/>
<dbReference type="KEGG" id="ljo:LJ_0999"/>
<dbReference type="eggNOG" id="COG0669">
    <property type="taxonomic scope" value="Bacteria"/>
</dbReference>
<dbReference type="HOGENOM" id="CLU_100149_0_1_9"/>
<dbReference type="UniPathway" id="UPA00241">
    <property type="reaction ID" value="UER00355"/>
</dbReference>
<dbReference type="Proteomes" id="UP000000581">
    <property type="component" value="Chromosome"/>
</dbReference>
<dbReference type="GO" id="GO:0005737">
    <property type="term" value="C:cytoplasm"/>
    <property type="evidence" value="ECO:0007669"/>
    <property type="project" value="UniProtKB-SubCell"/>
</dbReference>
<dbReference type="GO" id="GO:0005524">
    <property type="term" value="F:ATP binding"/>
    <property type="evidence" value="ECO:0007669"/>
    <property type="project" value="UniProtKB-KW"/>
</dbReference>
<dbReference type="GO" id="GO:0004595">
    <property type="term" value="F:pantetheine-phosphate adenylyltransferase activity"/>
    <property type="evidence" value="ECO:0007669"/>
    <property type="project" value="UniProtKB-UniRule"/>
</dbReference>
<dbReference type="GO" id="GO:0015937">
    <property type="term" value="P:coenzyme A biosynthetic process"/>
    <property type="evidence" value="ECO:0007669"/>
    <property type="project" value="UniProtKB-UniRule"/>
</dbReference>
<dbReference type="CDD" id="cd02163">
    <property type="entry name" value="PPAT"/>
    <property type="match status" value="1"/>
</dbReference>
<dbReference type="Gene3D" id="3.40.50.620">
    <property type="entry name" value="HUPs"/>
    <property type="match status" value="1"/>
</dbReference>
<dbReference type="HAMAP" id="MF_00151">
    <property type="entry name" value="PPAT_bact"/>
    <property type="match status" value="1"/>
</dbReference>
<dbReference type="InterPro" id="IPR004821">
    <property type="entry name" value="Cyt_trans-like"/>
</dbReference>
<dbReference type="InterPro" id="IPR001980">
    <property type="entry name" value="PPAT"/>
</dbReference>
<dbReference type="InterPro" id="IPR014729">
    <property type="entry name" value="Rossmann-like_a/b/a_fold"/>
</dbReference>
<dbReference type="NCBIfam" id="TIGR01510">
    <property type="entry name" value="coaD_prev_kdtB"/>
    <property type="match status" value="1"/>
</dbReference>
<dbReference type="NCBIfam" id="TIGR00125">
    <property type="entry name" value="cyt_tran_rel"/>
    <property type="match status" value="1"/>
</dbReference>
<dbReference type="PANTHER" id="PTHR21342">
    <property type="entry name" value="PHOSPHOPANTETHEINE ADENYLYLTRANSFERASE"/>
    <property type="match status" value="1"/>
</dbReference>
<dbReference type="PANTHER" id="PTHR21342:SF1">
    <property type="entry name" value="PHOSPHOPANTETHEINE ADENYLYLTRANSFERASE"/>
    <property type="match status" value="1"/>
</dbReference>
<dbReference type="Pfam" id="PF01467">
    <property type="entry name" value="CTP_transf_like"/>
    <property type="match status" value="1"/>
</dbReference>
<dbReference type="PRINTS" id="PR01020">
    <property type="entry name" value="LPSBIOSNTHSS"/>
</dbReference>
<dbReference type="SUPFAM" id="SSF52374">
    <property type="entry name" value="Nucleotidylyl transferase"/>
    <property type="match status" value="1"/>
</dbReference>
<accession>Q74JV6</accession>
<name>COAD_LACJO</name>
<evidence type="ECO:0000255" key="1">
    <source>
        <dbReference type="HAMAP-Rule" id="MF_00151"/>
    </source>
</evidence>
<proteinExistence type="inferred from homology"/>
<reference key="1">
    <citation type="journal article" date="2004" name="Proc. Natl. Acad. Sci. U.S.A.">
        <title>The genome sequence of the probiotic intestinal bacterium Lactobacillus johnsonii NCC 533.</title>
        <authorList>
            <person name="Pridmore R.D."/>
            <person name="Berger B."/>
            <person name="Desiere F."/>
            <person name="Vilanova D."/>
            <person name="Barretto C."/>
            <person name="Pittet A.-C."/>
            <person name="Zwahlen M.-C."/>
            <person name="Rouvet M."/>
            <person name="Altermann E."/>
            <person name="Barrangou R."/>
            <person name="Mollet B."/>
            <person name="Mercenier A."/>
            <person name="Klaenhammer T."/>
            <person name="Arigoni F."/>
            <person name="Schell M.A."/>
        </authorList>
    </citation>
    <scope>NUCLEOTIDE SEQUENCE [LARGE SCALE GENOMIC DNA]</scope>
    <source>
        <strain>CNCM I-1225 / La1 / NCC 533</strain>
    </source>
</reference>
<keyword id="KW-0067">ATP-binding</keyword>
<keyword id="KW-0173">Coenzyme A biosynthesis</keyword>
<keyword id="KW-0963">Cytoplasm</keyword>
<keyword id="KW-0460">Magnesium</keyword>
<keyword id="KW-0547">Nucleotide-binding</keyword>
<keyword id="KW-0548">Nucleotidyltransferase</keyword>
<keyword id="KW-0808">Transferase</keyword>
<comment type="function">
    <text evidence="1">Reversibly transfers an adenylyl group from ATP to 4'-phosphopantetheine, yielding dephospho-CoA (dPCoA) and pyrophosphate.</text>
</comment>
<comment type="catalytic activity">
    <reaction evidence="1">
        <text>(R)-4'-phosphopantetheine + ATP + H(+) = 3'-dephospho-CoA + diphosphate</text>
        <dbReference type="Rhea" id="RHEA:19801"/>
        <dbReference type="ChEBI" id="CHEBI:15378"/>
        <dbReference type="ChEBI" id="CHEBI:30616"/>
        <dbReference type="ChEBI" id="CHEBI:33019"/>
        <dbReference type="ChEBI" id="CHEBI:57328"/>
        <dbReference type="ChEBI" id="CHEBI:61723"/>
        <dbReference type="EC" id="2.7.7.3"/>
    </reaction>
</comment>
<comment type="cofactor">
    <cofactor evidence="1">
        <name>Mg(2+)</name>
        <dbReference type="ChEBI" id="CHEBI:18420"/>
    </cofactor>
</comment>
<comment type="pathway">
    <text evidence="1">Cofactor biosynthesis; coenzyme A biosynthesis; CoA from (R)-pantothenate: step 4/5.</text>
</comment>
<comment type="subunit">
    <text evidence="1">Homohexamer.</text>
</comment>
<comment type="subcellular location">
    <subcellularLocation>
        <location evidence="1">Cytoplasm</location>
    </subcellularLocation>
</comment>
<comment type="similarity">
    <text evidence="1">Belongs to the bacterial CoaD family.</text>
</comment>
<protein>
    <recommendedName>
        <fullName evidence="1">Phosphopantetheine adenylyltransferase</fullName>
        <ecNumber evidence="1">2.7.7.3</ecNumber>
    </recommendedName>
    <alternativeName>
        <fullName evidence="1">Dephospho-CoA pyrophosphorylase</fullName>
    </alternativeName>
    <alternativeName>
        <fullName evidence="1">Pantetheine-phosphate adenylyltransferase</fullName>
        <shortName evidence="1">PPAT</shortName>
    </alternativeName>
</protein>
<organism>
    <name type="scientific">Lactobacillus johnsonii (strain CNCM I-12250 / La1 / NCC 533)</name>
    <dbReference type="NCBI Taxonomy" id="257314"/>
    <lineage>
        <taxon>Bacteria</taxon>
        <taxon>Bacillati</taxon>
        <taxon>Bacillota</taxon>
        <taxon>Bacilli</taxon>
        <taxon>Lactobacillales</taxon>
        <taxon>Lactobacillaceae</taxon>
        <taxon>Lactobacillus</taxon>
    </lineage>
</organism>
<sequence>MIKAIFPGSFDPITNGHVEVIEGASHMFEKLYVVIMTNTSKKYLFTEKERLELARKVFENNEKVEVIARPAELTVEVAHELGAGAIVRGLRNTADFNYERDIAGINKTLDPDLNTVLLFTRPEDSFISSSMIKETVFFGGDVSTLVPKPVAAALEEKLRNRNNEKK</sequence>
<gene>
    <name evidence="1" type="primary">coaD</name>
    <name type="ordered locus">LJ_0999</name>
</gene>
<feature type="chain" id="PRO_0000156221" description="Phosphopantetheine adenylyltransferase">
    <location>
        <begin position="1"/>
        <end position="166"/>
    </location>
</feature>
<feature type="binding site" evidence="1">
    <location>
        <begin position="9"/>
        <end position="10"/>
    </location>
    <ligand>
        <name>ATP</name>
        <dbReference type="ChEBI" id="CHEBI:30616"/>
    </ligand>
</feature>
<feature type="binding site" evidence="1">
    <location>
        <position position="9"/>
    </location>
    <ligand>
        <name>substrate</name>
    </ligand>
</feature>
<feature type="binding site" evidence="1">
    <location>
        <position position="17"/>
    </location>
    <ligand>
        <name>ATP</name>
        <dbReference type="ChEBI" id="CHEBI:30616"/>
    </ligand>
</feature>
<feature type="binding site" evidence="1">
    <location>
        <position position="41"/>
    </location>
    <ligand>
        <name>substrate</name>
    </ligand>
</feature>
<feature type="binding site" evidence="1">
    <location>
        <position position="74"/>
    </location>
    <ligand>
        <name>substrate</name>
    </ligand>
</feature>
<feature type="binding site" evidence="1">
    <location>
        <position position="88"/>
    </location>
    <ligand>
        <name>substrate</name>
    </ligand>
</feature>
<feature type="binding site" evidence="1">
    <location>
        <begin position="89"/>
        <end position="91"/>
    </location>
    <ligand>
        <name>ATP</name>
        <dbReference type="ChEBI" id="CHEBI:30616"/>
    </ligand>
</feature>
<feature type="binding site" evidence="1">
    <location>
        <position position="99"/>
    </location>
    <ligand>
        <name>ATP</name>
        <dbReference type="ChEBI" id="CHEBI:30616"/>
    </ligand>
</feature>
<feature type="binding site" evidence="1">
    <location>
        <begin position="124"/>
        <end position="130"/>
    </location>
    <ligand>
        <name>ATP</name>
        <dbReference type="ChEBI" id="CHEBI:30616"/>
    </ligand>
</feature>
<feature type="site" description="Transition state stabilizer" evidence="1">
    <location>
        <position position="17"/>
    </location>
</feature>